<accession>B2UAG4</accession>
<feature type="chain" id="PRO_1000120791" description="Small ribosomal subunit protein bS6">
    <location>
        <begin position="1"/>
        <end position="122"/>
    </location>
</feature>
<feature type="region of interest" description="Disordered" evidence="2">
    <location>
        <begin position="99"/>
        <end position="122"/>
    </location>
</feature>
<dbReference type="EMBL" id="CP001068">
    <property type="protein sequence ID" value="ACD26326.1"/>
    <property type="molecule type" value="Genomic_DNA"/>
</dbReference>
<dbReference type="SMR" id="B2UAG4"/>
<dbReference type="STRING" id="402626.Rpic_1182"/>
<dbReference type="KEGG" id="rpi:Rpic_1182"/>
<dbReference type="eggNOG" id="COG0360">
    <property type="taxonomic scope" value="Bacteria"/>
</dbReference>
<dbReference type="HOGENOM" id="CLU_113441_6_1_4"/>
<dbReference type="GO" id="GO:0022627">
    <property type="term" value="C:cytosolic small ribosomal subunit"/>
    <property type="evidence" value="ECO:0007669"/>
    <property type="project" value="TreeGrafter"/>
</dbReference>
<dbReference type="GO" id="GO:0070181">
    <property type="term" value="F:small ribosomal subunit rRNA binding"/>
    <property type="evidence" value="ECO:0007669"/>
    <property type="project" value="TreeGrafter"/>
</dbReference>
<dbReference type="GO" id="GO:0003735">
    <property type="term" value="F:structural constituent of ribosome"/>
    <property type="evidence" value="ECO:0007669"/>
    <property type="project" value="InterPro"/>
</dbReference>
<dbReference type="GO" id="GO:0006412">
    <property type="term" value="P:translation"/>
    <property type="evidence" value="ECO:0007669"/>
    <property type="project" value="UniProtKB-UniRule"/>
</dbReference>
<dbReference type="CDD" id="cd00473">
    <property type="entry name" value="bS6"/>
    <property type="match status" value="1"/>
</dbReference>
<dbReference type="Gene3D" id="3.30.70.60">
    <property type="match status" value="1"/>
</dbReference>
<dbReference type="HAMAP" id="MF_00360">
    <property type="entry name" value="Ribosomal_bS6"/>
    <property type="match status" value="1"/>
</dbReference>
<dbReference type="InterPro" id="IPR000529">
    <property type="entry name" value="Ribosomal_bS6"/>
</dbReference>
<dbReference type="InterPro" id="IPR035980">
    <property type="entry name" value="Ribosomal_bS6_sf"/>
</dbReference>
<dbReference type="InterPro" id="IPR020814">
    <property type="entry name" value="Ribosomal_S6_plastid/chlpt"/>
</dbReference>
<dbReference type="InterPro" id="IPR014717">
    <property type="entry name" value="Transl_elong_EF1B/ribsomal_bS6"/>
</dbReference>
<dbReference type="NCBIfam" id="TIGR00166">
    <property type="entry name" value="S6"/>
    <property type="match status" value="1"/>
</dbReference>
<dbReference type="PANTHER" id="PTHR21011">
    <property type="entry name" value="MITOCHONDRIAL 28S RIBOSOMAL PROTEIN S6"/>
    <property type="match status" value="1"/>
</dbReference>
<dbReference type="PANTHER" id="PTHR21011:SF1">
    <property type="entry name" value="SMALL RIBOSOMAL SUBUNIT PROTEIN BS6M"/>
    <property type="match status" value="1"/>
</dbReference>
<dbReference type="Pfam" id="PF01250">
    <property type="entry name" value="Ribosomal_S6"/>
    <property type="match status" value="1"/>
</dbReference>
<dbReference type="SUPFAM" id="SSF54995">
    <property type="entry name" value="Ribosomal protein S6"/>
    <property type="match status" value="1"/>
</dbReference>
<sequence length="122" mass="13935">MRHYEIVFIVHPDQSEQVPAMIERYKSTVTSQGGQVHRVEDWGRRQLAYMIQKLAKAHYVCLNIECGKETLAELEHAFKFNDAVLRHLIVQTKKAETAPSPMMKEVAREEAKKAAAQTEQAA</sequence>
<reference key="1">
    <citation type="submission" date="2008-05" db="EMBL/GenBank/DDBJ databases">
        <title>Complete sequence of chromosome 1 of Ralstonia pickettii 12J.</title>
        <authorList>
            <person name="Lucas S."/>
            <person name="Copeland A."/>
            <person name="Lapidus A."/>
            <person name="Glavina del Rio T."/>
            <person name="Dalin E."/>
            <person name="Tice H."/>
            <person name="Bruce D."/>
            <person name="Goodwin L."/>
            <person name="Pitluck S."/>
            <person name="Meincke L."/>
            <person name="Brettin T."/>
            <person name="Detter J.C."/>
            <person name="Han C."/>
            <person name="Kuske C.R."/>
            <person name="Schmutz J."/>
            <person name="Larimer F."/>
            <person name="Land M."/>
            <person name="Hauser L."/>
            <person name="Kyrpides N."/>
            <person name="Mikhailova N."/>
            <person name="Marsh T."/>
            <person name="Richardson P."/>
        </authorList>
    </citation>
    <scope>NUCLEOTIDE SEQUENCE [LARGE SCALE GENOMIC DNA]</scope>
    <source>
        <strain>12J</strain>
    </source>
</reference>
<keyword id="KW-0687">Ribonucleoprotein</keyword>
<keyword id="KW-0689">Ribosomal protein</keyword>
<keyword id="KW-0694">RNA-binding</keyword>
<keyword id="KW-0699">rRNA-binding</keyword>
<gene>
    <name evidence="1" type="primary">rpsF</name>
    <name type="ordered locus">Rpic_1182</name>
</gene>
<name>RS6_RALPJ</name>
<protein>
    <recommendedName>
        <fullName evidence="1">Small ribosomal subunit protein bS6</fullName>
    </recommendedName>
    <alternativeName>
        <fullName evidence="3">30S ribosomal protein S6</fullName>
    </alternativeName>
</protein>
<evidence type="ECO:0000255" key="1">
    <source>
        <dbReference type="HAMAP-Rule" id="MF_00360"/>
    </source>
</evidence>
<evidence type="ECO:0000256" key="2">
    <source>
        <dbReference type="SAM" id="MobiDB-lite"/>
    </source>
</evidence>
<evidence type="ECO:0000305" key="3"/>
<proteinExistence type="inferred from homology"/>
<organism>
    <name type="scientific">Ralstonia pickettii (strain 12J)</name>
    <dbReference type="NCBI Taxonomy" id="402626"/>
    <lineage>
        <taxon>Bacteria</taxon>
        <taxon>Pseudomonadati</taxon>
        <taxon>Pseudomonadota</taxon>
        <taxon>Betaproteobacteria</taxon>
        <taxon>Burkholderiales</taxon>
        <taxon>Burkholderiaceae</taxon>
        <taxon>Ralstonia</taxon>
    </lineage>
</organism>
<comment type="function">
    <text evidence="1">Binds together with bS18 to 16S ribosomal RNA.</text>
</comment>
<comment type="similarity">
    <text evidence="1">Belongs to the bacterial ribosomal protein bS6 family.</text>
</comment>